<sequence length="345" mass="38719">MVLFKAKFSFQRRVKLAQTLWLLSWLSVLVGCLTFGMGIFLKVQLWIHNEVMENTSAHAVPNTVITAGLVGILLGIYAGKVSQASMDVTKYQRWKSFMMPFFFLAILSCLVCLAALVLSVALRGTLEESLKIGLKNAIRFYKDTDTPGRCYQKRSMDKLQMDFQCCGNNHPKDWFEVQWISNRYLDFSSKEVKDRIKSNVDGRYLMDSVPFSCCNPSSPRPCIQMQITNNSAHYSYNYQSDELNIWVRGCREALLSYYTGIMATNGAAVTLSFLLQASVLVSLRYLHTSMDKISGPDDMEADTEGFILEKGVTETMNTTLEKMKGLFMSNQVETAEGGGEAAAAS</sequence>
<organism>
    <name type="scientific">Xenopus laevis</name>
    <name type="common">African clawed frog</name>
    <dbReference type="NCBI Taxonomy" id="8355"/>
    <lineage>
        <taxon>Eukaryota</taxon>
        <taxon>Metazoa</taxon>
        <taxon>Chordata</taxon>
        <taxon>Craniata</taxon>
        <taxon>Vertebrata</taxon>
        <taxon>Euteleostomi</taxon>
        <taxon>Amphibia</taxon>
        <taxon>Batrachia</taxon>
        <taxon>Anura</taxon>
        <taxon>Pipoidea</taxon>
        <taxon>Pipidae</taxon>
        <taxon>Xenopodinae</taxon>
        <taxon>Xenopus</taxon>
        <taxon>Xenopus</taxon>
    </lineage>
</organism>
<evidence type="ECO:0000255" key="1"/>
<evidence type="ECO:0000305" key="2"/>
<gene>
    <name type="primary">rds35</name>
</gene>
<reference key="1">
    <citation type="journal article" date="1996" name="J. Cell Sci.">
        <title>Three homologs of rds/peripherin in Xenopus laevis photoreceptors that exhibit covalent and non-covalent interactions.</title>
        <authorList>
            <person name="Kedzierski W."/>
            <person name="Moghrabi W.N."/>
            <person name="Allen A.C."/>
            <person name="Jablonski-Stiemke M.M."/>
            <person name="Azarian S.M."/>
            <person name="Bok D."/>
            <person name="Travis G.H."/>
        </authorList>
    </citation>
    <scope>NUCLEOTIDE SEQUENCE [MRNA]</scope>
</reference>
<keyword id="KW-1015">Disulfide bond</keyword>
<keyword id="KW-0325">Glycoprotein</keyword>
<keyword id="KW-0472">Membrane</keyword>
<keyword id="KW-1185">Reference proteome</keyword>
<keyword id="KW-0812">Transmembrane</keyword>
<keyword id="KW-1133">Transmembrane helix</keyword>
<accession>O42581</accession>
<protein>
    <recommendedName>
        <fullName>RDS/peripherin-like protein xRDS35</fullName>
    </recommendedName>
</protein>
<name>RDS1_XENLA</name>
<dbReference type="EMBL" id="L79913">
    <property type="protein sequence ID" value="AAB64231.1"/>
    <property type="molecule type" value="mRNA"/>
</dbReference>
<dbReference type="RefSeq" id="XP_018111940.1">
    <property type="nucleotide sequence ID" value="XM_018256451.1"/>
</dbReference>
<dbReference type="SMR" id="O42581"/>
<dbReference type="GlyCosmos" id="O42581">
    <property type="glycosylation" value="2 sites, No reported glycans"/>
</dbReference>
<dbReference type="DNASU" id="379513"/>
<dbReference type="AGR" id="Xenbase:XB-GENE-962407"/>
<dbReference type="Xenbase" id="XB-GENE-962407">
    <property type="gene designation" value="rom1.L"/>
</dbReference>
<dbReference type="OMA" id="GGAITFC"/>
<dbReference type="Proteomes" id="UP000186698">
    <property type="component" value="Unplaced"/>
</dbReference>
<dbReference type="Bgee" id="379513">
    <property type="expression patterns" value="Expressed in camera-type eye and 8 other cell types or tissues"/>
</dbReference>
<dbReference type="GO" id="GO:0005886">
    <property type="term" value="C:plasma membrane"/>
    <property type="evidence" value="ECO:0007669"/>
    <property type="project" value="TreeGrafter"/>
</dbReference>
<dbReference type="GO" id="GO:0007601">
    <property type="term" value="P:visual perception"/>
    <property type="evidence" value="ECO:0007669"/>
    <property type="project" value="InterPro"/>
</dbReference>
<dbReference type="CDD" id="cd03162">
    <property type="entry name" value="peripherin_like_LEL"/>
    <property type="match status" value="1"/>
</dbReference>
<dbReference type="FunFam" id="1.10.1450.10:FF:000002">
    <property type="entry name" value="Retinal outer segment membrane protein 1"/>
    <property type="match status" value="1"/>
</dbReference>
<dbReference type="Gene3D" id="1.10.1450.10">
    <property type="entry name" value="Tetraspanin"/>
    <property type="match status" value="1"/>
</dbReference>
<dbReference type="InterPro" id="IPR000830">
    <property type="entry name" value="Peripherin/rom-1"/>
</dbReference>
<dbReference type="InterPro" id="IPR018498">
    <property type="entry name" value="Peripherin/rom-1_CS"/>
</dbReference>
<dbReference type="InterPro" id="IPR042026">
    <property type="entry name" value="Peripherin_LEL"/>
</dbReference>
<dbReference type="InterPro" id="IPR018499">
    <property type="entry name" value="Tetraspanin/Peripherin"/>
</dbReference>
<dbReference type="InterPro" id="IPR008952">
    <property type="entry name" value="Tetraspanin_EC2_sf"/>
</dbReference>
<dbReference type="PANTHER" id="PTHR19282:SF440">
    <property type="entry name" value="PERIPHERIN-2"/>
    <property type="match status" value="1"/>
</dbReference>
<dbReference type="PANTHER" id="PTHR19282">
    <property type="entry name" value="TETRASPANIN"/>
    <property type="match status" value="1"/>
</dbReference>
<dbReference type="Pfam" id="PF00335">
    <property type="entry name" value="Tetraspanin"/>
    <property type="match status" value="1"/>
</dbReference>
<dbReference type="PRINTS" id="PR00218">
    <property type="entry name" value="PERIPHERNRDS"/>
</dbReference>
<dbReference type="SUPFAM" id="SSF48652">
    <property type="entry name" value="Tetraspanin"/>
    <property type="match status" value="1"/>
</dbReference>
<dbReference type="PROSITE" id="PS00930">
    <property type="entry name" value="RDS_ROM1"/>
    <property type="match status" value="1"/>
</dbReference>
<feature type="chain" id="PRO_0000168114" description="RDS/peripherin-like protein xRDS35">
    <location>
        <begin position="1"/>
        <end position="345"/>
    </location>
</feature>
<feature type="topological domain" description="Cytoplasmic" evidence="1">
    <location>
        <begin position="1"/>
        <end position="24"/>
    </location>
</feature>
<feature type="transmembrane region" description="Helical" evidence="1">
    <location>
        <begin position="25"/>
        <end position="43"/>
    </location>
</feature>
<feature type="topological domain" description="Lumenal" evidence="1">
    <location>
        <begin position="44"/>
        <end position="61"/>
    </location>
</feature>
<feature type="transmembrane region" description="Helical" evidence="1">
    <location>
        <begin position="62"/>
        <end position="80"/>
    </location>
</feature>
<feature type="topological domain" description="Cytoplasmic" evidence="1">
    <location>
        <begin position="81"/>
        <end position="99"/>
    </location>
</feature>
<feature type="transmembrane region" description="Helical" evidence="1">
    <location>
        <begin position="100"/>
        <end position="123"/>
    </location>
</feature>
<feature type="topological domain" description="Lumenal" evidence="1">
    <location>
        <begin position="124"/>
        <end position="264"/>
    </location>
</feature>
<feature type="transmembrane region" description="Helical" evidence="1">
    <location>
        <begin position="265"/>
        <end position="290"/>
    </location>
</feature>
<feature type="topological domain" description="Cytoplasmic" evidence="1">
    <location>
        <begin position="291"/>
        <end position="345"/>
    </location>
</feature>
<feature type="glycosylation site" description="N-linked (GlcNAc...) asparagine" evidence="1">
    <location>
        <position position="54"/>
    </location>
</feature>
<feature type="glycosylation site" description="N-linked (GlcNAc...) asparagine" evidence="1">
    <location>
        <position position="229"/>
    </location>
</feature>
<proteinExistence type="evidence at transcript level"/>
<comment type="subunit">
    <text>Homodimer; disulfide-linked.</text>
</comment>
<comment type="subcellular location">
    <subcellularLocation>
        <location>Membrane</location>
        <topology>Multi-pass membrane protein</topology>
    </subcellularLocation>
</comment>
<comment type="tissue specificity">
    <text>Rod specific.</text>
</comment>
<comment type="similarity">
    <text evidence="2">Belongs to the PRPH2/ROM1 family.</text>
</comment>